<proteinExistence type="inferred from homology"/>
<organism>
    <name type="scientific">Cyanidium caldarium</name>
    <name type="common">Red alga</name>
    <dbReference type="NCBI Taxonomy" id="2771"/>
    <lineage>
        <taxon>Eukaryota</taxon>
        <taxon>Rhodophyta</taxon>
        <taxon>Bangiophyceae</taxon>
        <taxon>Cyanidiales</taxon>
        <taxon>Cyanidiaceae</taxon>
        <taxon>Cyanidium</taxon>
    </lineage>
</organism>
<sequence>MNIQPNTFFLKAMLTLLNIKGNNMCWAHKKNMFERFTEKAVKVIMLAQEEARRLGHNFVGTEQILLGILGEGTGLAAKALKSMGITLKDARIEVEKIIGRGSGFVAIEIPFTPRAKKILELAIEESRILTHNYVGTEHLLLGLIKEGEGVAARVLENLGVDLPKLRSNIIRMIGETSEVSVGATSGRSKVPTLEEFGTNLTQMAVEGKLDPVVGRAKEIERVVQILGRRTKNNPVLIGEPGVGKTAIAEGLAQRIINNEVPDTLEDKKVITLDVSLLVAGTKYRGEFEERLKKIMDEIRMADNVILVIDEVHTLIGAGAAEGAIDAANILKPALARGELQCIGATTLEEYRKHIEKDAALERRFQPVMVEEPTVEETIEILRGLRDRYEAHHRLKISDSAIVAAAKLSDQYIADRFLPDKAIDLVDEASSRVRLMNYKLPPSAEYLDEELRHIQKIKNELIRSGDFEEASQFREREIEVKVQMAALMKAKKEAIEEELALNPPIVNEDDIANIVSSWTGIPVSKLTKSESEKLLHMEETLHSRIVGQNEAVIAVSKAIRRARVGLKNPNRPIASFIFSGPTGVGKTELTKAMASYFFGSEEAMVRLDMSEYMERHTVSKLIGSPPGYVGYNEGGQLTEAVRKRPYTVVLFDEIEKAHPDVFNLLLQILEDGRLTDSKGRTIDFKNTLLIMTSNIGSKVIEKKGGGLGFELEENIEELQYSRMRNLVNEELKQYFRPEFLNRVDEIIVFRQLTKDEVRDIAHIMLREIFERVKQQGISLQVTERFKNLLIEEGYNPSYGARPLRRALVRLLEDSLAEEVLSGKIKEGDNAMIDVDENKQVKILLGNSNNQHAFLA</sequence>
<protein>
    <recommendedName>
        <fullName>ATP-dependent Clp protease ATP-binding subunit ClpA homolog</fullName>
    </recommendedName>
</protein>
<feature type="chain" id="PRO_0000191216" description="ATP-dependent Clp protease ATP-binding subunit ClpA homolog">
    <location>
        <begin position="1"/>
        <end position="854"/>
    </location>
</feature>
<feature type="domain" description="Clp R" evidence="3">
    <location>
        <begin position="33"/>
        <end position="175"/>
    </location>
</feature>
<feature type="domain" description="UVR" evidence="2">
    <location>
        <begin position="447"/>
        <end position="482"/>
    </location>
</feature>
<feature type="region of interest" description="Repeat 1" evidence="3">
    <location>
        <begin position="36"/>
        <end position="101"/>
    </location>
</feature>
<feature type="region of interest" description="Repeat 2" evidence="3">
    <location>
        <begin position="111"/>
        <end position="175"/>
    </location>
</feature>
<feature type="binding site" evidence="1">
    <location>
        <begin position="238"/>
        <end position="245"/>
    </location>
    <ligand>
        <name>ATP</name>
        <dbReference type="ChEBI" id="CHEBI:30616"/>
    </ligand>
</feature>
<feature type="binding site" evidence="1">
    <location>
        <begin position="579"/>
        <end position="586"/>
    </location>
    <ligand>
        <name>ATP</name>
        <dbReference type="ChEBI" id="CHEBI:30616"/>
    </ligand>
</feature>
<comment type="function">
    <text>May interact with a ClpP-like protease involved in degradation of denatured proteins in the chloroplast.</text>
</comment>
<comment type="subcellular location">
    <subcellularLocation>
        <location>Plastid</location>
        <location>Chloroplast</location>
    </subcellularLocation>
</comment>
<comment type="similarity">
    <text evidence="4">Belongs to the ClpA/ClpB family.</text>
</comment>
<accession>Q9TM05</accession>
<geneLocation type="chloroplast"/>
<dbReference type="EMBL" id="AF022186">
    <property type="protein sequence ID" value="AAF12982.1"/>
    <property type="molecule type" value="Genomic_DNA"/>
</dbReference>
<dbReference type="RefSeq" id="NP_045112.1">
    <property type="nucleotide sequence ID" value="NC_001840.1"/>
</dbReference>
<dbReference type="SMR" id="Q9TM05"/>
<dbReference type="GeneID" id="800182"/>
<dbReference type="GO" id="GO:0009507">
    <property type="term" value="C:chloroplast"/>
    <property type="evidence" value="ECO:0007669"/>
    <property type="project" value="UniProtKB-SubCell"/>
</dbReference>
<dbReference type="GO" id="GO:0005524">
    <property type="term" value="F:ATP binding"/>
    <property type="evidence" value="ECO:0007669"/>
    <property type="project" value="UniProtKB-KW"/>
</dbReference>
<dbReference type="GO" id="GO:0016887">
    <property type="term" value="F:ATP hydrolysis activity"/>
    <property type="evidence" value="ECO:0007669"/>
    <property type="project" value="InterPro"/>
</dbReference>
<dbReference type="GO" id="GO:0034605">
    <property type="term" value="P:cellular response to heat"/>
    <property type="evidence" value="ECO:0007669"/>
    <property type="project" value="TreeGrafter"/>
</dbReference>
<dbReference type="CDD" id="cd00009">
    <property type="entry name" value="AAA"/>
    <property type="match status" value="1"/>
</dbReference>
<dbReference type="CDD" id="cd19499">
    <property type="entry name" value="RecA-like_ClpB_Hsp104-like"/>
    <property type="match status" value="1"/>
</dbReference>
<dbReference type="FunFam" id="1.10.1780.10:FF:000004">
    <property type="entry name" value="ATP-dependent Clp protease ATP-binding subunit ClpC"/>
    <property type="match status" value="1"/>
</dbReference>
<dbReference type="FunFam" id="3.40.50.300:FF:000025">
    <property type="entry name" value="ATP-dependent Clp protease subunit"/>
    <property type="match status" value="1"/>
</dbReference>
<dbReference type="FunFam" id="3.40.50.300:FF:000010">
    <property type="entry name" value="Chaperone clpB 1, putative"/>
    <property type="match status" value="1"/>
</dbReference>
<dbReference type="Gene3D" id="1.10.8.60">
    <property type="match status" value="2"/>
</dbReference>
<dbReference type="Gene3D" id="1.10.1780.10">
    <property type="entry name" value="Clp, N-terminal domain"/>
    <property type="match status" value="1"/>
</dbReference>
<dbReference type="Gene3D" id="3.40.50.300">
    <property type="entry name" value="P-loop containing nucleotide triphosphate hydrolases"/>
    <property type="match status" value="2"/>
</dbReference>
<dbReference type="Gene3D" id="4.10.860.10">
    <property type="entry name" value="UVR domain"/>
    <property type="match status" value="1"/>
</dbReference>
<dbReference type="InterPro" id="IPR003593">
    <property type="entry name" value="AAA+_ATPase"/>
</dbReference>
<dbReference type="InterPro" id="IPR003959">
    <property type="entry name" value="ATPase_AAA_core"/>
</dbReference>
<dbReference type="InterPro" id="IPR019489">
    <property type="entry name" value="Clp_ATPase_C"/>
</dbReference>
<dbReference type="InterPro" id="IPR036628">
    <property type="entry name" value="Clp_N_dom_sf"/>
</dbReference>
<dbReference type="InterPro" id="IPR004176">
    <property type="entry name" value="Clp_R_dom"/>
</dbReference>
<dbReference type="InterPro" id="IPR001270">
    <property type="entry name" value="ClpA/B"/>
</dbReference>
<dbReference type="InterPro" id="IPR018368">
    <property type="entry name" value="ClpA/B_CS1"/>
</dbReference>
<dbReference type="InterPro" id="IPR028299">
    <property type="entry name" value="ClpA/B_CS2"/>
</dbReference>
<dbReference type="InterPro" id="IPR041546">
    <property type="entry name" value="ClpA/ClpB_AAA_lid"/>
</dbReference>
<dbReference type="InterPro" id="IPR050130">
    <property type="entry name" value="ClpA_ClpB"/>
</dbReference>
<dbReference type="InterPro" id="IPR027417">
    <property type="entry name" value="P-loop_NTPase"/>
</dbReference>
<dbReference type="InterPro" id="IPR001943">
    <property type="entry name" value="UVR_dom"/>
</dbReference>
<dbReference type="PANTHER" id="PTHR11638">
    <property type="entry name" value="ATP-DEPENDENT CLP PROTEASE"/>
    <property type="match status" value="1"/>
</dbReference>
<dbReference type="PANTHER" id="PTHR11638:SF155">
    <property type="entry name" value="CHAPERONE PROTEIN CLPC1, CHLOROPLASTIC-LIKE"/>
    <property type="match status" value="1"/>
</dbReference>
<dbReference type="Pfam" id="PF00004">
    <property type="entry name" value="AAA"/>
    <property type="match status" value="1"/>
</dbReference>
<dbReference type="Pfam" id="PF07724">
    <property type="entry name" value="AAA_2"/>
    <property type="match status" value="1"/>
</dbReference>
<dbReference type="Pfam" id="PF17871">
    <property type="entry name" value="AAA_lid_9"/>
    <property type="match status" value="1"/>
</dbReference>
<dbReference type="Pfam" id="PF02861">
    <property type="entry name" value="Clp_N"/>
    <property type="match status" value="2"/>
</dbReference>
<dbReference type="Pfam" id="PF10431">
    <property type="entry name" value="ClpB_D2-small"/>
    <property type="match status" value="1"/>
</dbReference>
<dbReference type="PRINTS" id="PR00300">
    <property type="entry name" value="CLPPROTEASEA"/>
</dbReference>
<dbReference type="SMART" id="SM00382">
    <property type="entry name" value="AAA"/>
    <property type="match status" value="2"/>
</dbReference>
<dbReference type="SMART" id="SM01086">
    <property type="entry name" value="ClpB_D2-small"/>
    <property type="match status" value="1"/>
</dbReference>
<dbReference type="SUPFAM" id="SSF81923">
    <property type="entry name" value="Double Clp-N motif"/>
    <property type="match status" value="1"/>
</dbReference>
<dbReference type="SUPFAM" id="SSF52540">
    <property type="entry name" value="P-loop containing nucleoside triphosphate hydrolases"/>
    <property type="match status" value="2"/>
</dbReference>
<dbReference type="PROSITE" id="PS51903">
    <property type="entry name" value="CLP_R"/>
    <property type="match status" value="1"/>
</dbReference>
<dbReference type="PROSITE" id="PS00870">
    <property type="entry name" value="CLPAB_1"/>
    <property type="match status" value="1"/>
</dbReference>
<dbReference type="PROSITE" id="PS00871">
    <property type="entry name" value="CLPAB_2"/>
    <property type="match status" value="1"/>
</dbReference>
<dbReference type="PROSITE" id="PS50151">
    <property type="entry name" value="UVR"/>
    <property type="match status" value="1"/>
</dbReference>
<reference key="1">
    <citation type="journal article" date="2000" name="J. Mol. Evol.">
        <title>The structure and gene repertoire of an ancient red algal plastid genome.</title>
        <authorList>
            <person name="Gloeckner G."/>
            <person name="Rosenthal A."/>
            <person name="Valentin K.-U."/>
        </authorList>
    </citation>
    <scope>NUCLEOTIDE SEQUENCE [LARGE SCALE GENOMIC DNA]</scope>
    <source>
        <strain>RK-1</strain>
    </source>
</reference>
<keyword id="KW-0067">ATP-binding</keyword>
<keyword id="KW-0143">Chaperone</keyword>
<keyword id="KW-0150">Chloroplast</keyword>
<keyword id="KW-0547">Nucleotide-binding</keyword>
<keyword id="KW-0934">Plastid</keyword>
<keyword id="KW-0677">Repeat</keyword>
<evidence type="ECO:0000255" key="1"/>
<evidence type="ECO:0000255" key="2">
    <source>
        <dbReference type="PROSITE-ProRule" id="PRU00217"/>
    </source>
</evidence>
<evidence type="ECO:0000255" key="3">
    <source>
        <dbReference type="PROSITE-ProRule" id="PRU01251"/>
    </source>
</evidence>
<evidence type="ECO:0000305" key="4"/>
<name>CLPC_CYACA</name>
<gene>
    <name type="primary">clpC</name>
</gene>